<comment type="function">
    <text evidence="1">Catalyzes the reduction of the glycolytic intermediate dihydroxyacetone phosphate (DHAP) to sn-glycerol 3-phosphate (G3P), the key precursor for phospholipid synthesis.</text>
</comment>
<comment type="catalytic activity">
    <reaction evidence="1">
        <text>sn-glycerol 3-phosphate + NAD(+) = dihydroxyacetone phosphate + NADH + H(+)</text>
        <dbReference type="Rhea" id="RHEA:11092"/>
        <dbReference type="ChEBI" id="CHEBI:15378"/>
        <dbReference type="ChEBI" id="CHEBI:57540"/>
        <dbReference type="ChEBI" id="CHEBI:57597"/>
        <dbReference type="ChEBI" id="CHEBI:57642"/>
        <dbReference type="ChEBI" id="CHEBI:57945"/>
        <dbReference type="EC" id="1.1.1.94"/>
    </reaction>
    <physiologicalReaction direction="right-to-left" evidence="1">
        <dbReference type="Rhea" id="RHEA:11094"/>
    </physiologicalReaction>
</comment>
<comment type="catalytic activity">
    <reaction evidence="1">
        <text>sn-glycerol 3-phosphate + NADP(+) = dihydroxyacetone phosphate + NADPH + H(+)</text>
        <dbReference type="Rhea" id="RHEA:11096"/>
        <dbReference type="ChEBI" id="CHEBI:15378"/>
        <dbReference type="ChEBI" id="CHEBI:57597"/>
        <dbReference type="ChEBI" id="CHEBI:57642"/>
        <dbReference type="ChEBI" id="CHEBI:57783"/>
        <dbReference type="ChEBI" id="CHEBI:58349"/>
        <dbReference type="EC" id="1.1.1.94"/>
    </reaction>
    <physiologicalReaction direction="right-to-left" evidence="1">
        <dbReference type="Rhea" id="RHEA:11098"/>
    </physiologicalReaction>
</comment>
<comment type="pathway">
    <text evidence="1">Membrane lipid metabolism; glycerophospholipid metabolism.</text>
</comment>
<comment type="subcellular location">
    <subcellularLocation>
        <location evidence="1">Cytoplasm</location>
    </subcellularLocation>
</comment>
<comment type="similarity">
    <text evidence="1">Belongs to the NAD-dependent glycerol-3-phosphate dehydrogenase family.</text>
</comment>
<reference key="1">
    <citation type="journal article" date="2006" name="J. Bacteriol.">
        <title>Pathogenomic sequence analysis of Bacillus cereus and Bacillus thuringiensis isolates closely related to Bacillus anthracis.</title>
        <authorList>
            <person name="Han C.S."/>
            <person name="Xie G."/>
            <person name="Challacombe J.F."/>
            <person name="Altherr M.R."/>
            <person name="Bhotika S.S."/>
            <person name="Bruce D."/>
            <person name="Campbell C.S."/>
            <person name="Campbell M.L."/>
            <person name="Chen J."/>
            <person name="Chertkov O."/>
            <person name="Cleland C."/>
            <person name="Dimitrijevic M."/>
            <person name="Doggett N.A."/>
            <person name="Fawcett J.J."/>
            <person name="Glavina T."/>
            <person name="Goodwin L.A."/>
            <person name="Hill K.K."/>
            <person name="Hitchcock P."/>
            <person name="Jackson P.J."/>
            <person name="Keim P."/>
            <person name="Kewalramani A.R."/>
            <person name="Longmire J."/>
            <person name="Lucas S."/>
            <person name="Malfatti S."/>
            <person name="McMurry K."/>
            <person name="Meincke L.J."/>
            <person name="Misra M."/>
            <person name="Moseman B.L."/>
            <person name="Mundt M."/>
            <person name="Munk A.C."/>
            <person name="Okinaka R.T."/>
            <person name="Parson-Quintana B."/>
            <person name="Reilly L.P."/>
            <person name="Richardson P."/>
            <person name="Robinson D.L."/>
            <person name="Rubin E."/>
            <person name="Saunders E."/>
            <person name="Tapia R."/>
            <person name="Tesmer J.G."/>
            <person name="Thayer N."/>
            <person name="Thompson L.S."/>
            <person name="Tice H."/>
            <person name="Ticknor L.O."/>
            <person name="Wills P.L."/>
            <person name="Brettin T.S."/>
            <person name="Gilna P."/>
        </authorList>
    </citation>
    <scope>NUCLEOTIDE SEQUENCE [LARGE SCALE GENOMIC DNA]</scope>
    <source>
        <strain>ZK / E33L</strain>
    </source>
</reference>
<feature type="chain" id="PRO_0000137922" description="Glycerol-3-phosphate dehydrogenase [NAD(P)+]">
    <location>
        <begin position="1"/>
        <end position="340"/>
    </location>
</feature>
<feature type="active site" description="Proton acceptor" evidence="1">
    <location>
        <position position="192"/>
    </location>
</feature>
<feature type="binding site" evidence="1">
    <location>
        <position position="11"/>
    </location>
    <ligand>
        <name>NADPH</name>
        <dbReference type="ChEBI" id="CHEBI:57783"/>
    </ligand>
</feature>
<feature type="binding site" evidence="1">
    <location>
        <position position="12"/>
    </location>
    <ligand>
        <name>NADPH</name>
        <dbReference type="ChEBI" id="CHEBI:57783"/>
    </ligand>
</feature>
<feature type="binding site" evidence="1">
    <location>
        <position position="33"/>
    </location>
    <ligand>
        <name>NADPH</name>
        <dbReference type="ChEBI" id="CHEBI:57783"/>
    </ligand>
</feature>
<feature type="binding site" evidence="1">
    <location>
        <position position="106"/>
    </location>
    <ligand>
        <name>NADPH</name>
        <dbReference type="ChEBI" id="CHEBI:57783"/>
    </ligand>
</feature>
<feature type="binding site" evidence="1">
    <location>
        <position position="106"/>
    </location>
    <ligand>
        <name>sn-glycerol 3-phosphate</name>
        <dbReference type="ChEBI" id="CHEBI:57597"/>
    </ligand>
</feature>
<feature type="binding site" evidence="1">
    <location>
        <position position="137"/>
    </location>
    <ligand>
        <name>sn-glycerol 3-phosphate</name>
        <dbReference type="ChEBI" id="CHEBI:57597"/>
    </ligand>
</feature>
<feature type="binding site" evidence="1">
    <location>
        <position position="139"/>
    </location>
    <ligand>
        <name>sn-glycerol 3-phosphate</name>
        <dbReference type="ChEBI" id="CHEBI:57597"/>
    </ligand>
</feature>
<feature type="binding site" evidence="1">
    <location>
        <position position="141"/>
    </location>
    <ligand>
        <name>NADPH</name>
        <dbReference type="ChEBI" id="CHEBI:57783"/>
    </ligand>
</feature>
<feature type="binding site" evidence="1">
    <location>
        <position position="192"/>
    </location>
    <ligand>
        <name>sn-glycerol 3-phosphate</name>
        <dbReference type="ChEBI" id="CHEBI:57597"/>
    </ligand>
</feature>
<feature type="binding site" evidence="1">
    <location>
        <position position="245"/>
    </location>
    <ligand>
        <name>sn-glycerol 3-phosphate</name>
        <dbReference type="ChEBI" id="CHEBI:57597"/>
    </ligand>
</feature>
<feature type="binding site" evidence="1">
    <location>
        <position position="255"/>
    </location>
    <ligand>
        <name>sn-glycerol 3-phosphate</name>
        <dbReference type="ChEBI" id="CHEBI:57597"/>
    </ligand>
</feature>
<feature type="binding site" evidence="1">
    <location>
        <position position="256"/>
    </location>
    <ligand>
        <name>NADPH</name>
        <dbReference type="ChEBI" id="CHEBI:57783"/>
    </ligand>
</feature>
<feature type="binding site" evidence="1">
    <location>
        <position position="256"/>
    </location>
    <ligand>
        <name>sn-glycerol 3-phosphate</name>
        <dbReference type="ChEBI" id="CHEBI:57597"/>
    </ligand>
</feature>
<feature type="binding site" evidence="1">
    <location>
        <position position="257"/>
    </location>
    <ligand>
        <name>sn-glycerol 3-phosphate</name>
        <dbReference type="ChEBI" id="CHEBI:57597"/>
    </ligand>
</feature>
<feature type="binding site" evidence="1">
    <location>
        <position position="280"/>
    </location>
    <ligand>
        <name>NADPH</name>
        <dbReference type="ChEBI" id="CHEBI:57783"/>
    </ligand>
</feature>
<feature type="binding site" evidence="1">
    <location>
        <position position="282"/>
    </location>
    <ligand>
        <name>NADPH</name>
        <dbReference type="ChEBI" id="CHEBI:57783"/>
    </ligand>
</feature>
<evidence type="ECO:0000255" key="1">
    <source>
        <dbReference type="HAMAP-Rule" id="MF_00394"/>
    </source>
</evidence>
<protein>
    <recommendedName>
        <fullName evidence="1">Glycerol-3-phosphate dehydrogenase [NAD(P)+]</fullName>
        <ecNumber evidence="1">1.1.1.94</ecNumber>
    </recommendedName>
    <alternativeName>
        <fullName evidence="1">NAD(P)(+)-dependent glycerol-3-phosphate dehydrogenase</fullName>
    </alternativeName>
    <alternativeName>
        <fullName evidence="1">NAD(P)H-dependent dihydroxyacetone-phosphate reductase</fullName>
    </alternativeName>
</protein>
<proteinExistence type="inferred from homology"/>
<dbReference type="EC" id="1.1.1.94" evidence="1"/>
<dbReference type="EMBL" id="CP000001">
    <property type="protein sequence ID" value="AAU18862.1"/>
    <property type="molecule type" value="Genomic_DNA"/>
</dbReference>
<dbReference type="RefSeq" id="WP_000161776.1">
    <property type="nucleotide sequence ID" value="NZ_CP009968.1"/>
</dbReference>
<dbReference type="SMR" id="Q63DM7"/>
<dbReference type="KEGG" id="bcz:BCE33L1387"/>
<dbReference type="PATRIC" id="fig|288681.22.peg.4165"/>
<dbReference type="UniPathway" id="UPA00940"/>
<dbReference type="Proteomes" id="UP000002612">
    <property type="component" value="Chromosome"/>
</dbReference>
<dbReference type="GO" id="GO:0005829">
    <property type="term" value="C:cytosol"/>
    <property type="evidence" value="ECO:0007669"/>
    <property type="project" value="TreeGrafter"/>
</dbReference>
<dbReference type="GO" id="GO:0047952">
    <property type="term" value="F:glycerol-3-phosphate dehydrogenase [NAD(P)+] activity"/>
    <property type="evidence" value="ECO:0007669"/>
    <property type="project" value="UniProtKB-UniRule"/>
</dbReference>
<dbReference type="GO" id="GO:0051287">
    <property type="term" value="F:NAD binding"/>
    <property type="evidence" value="ECO:0007669"/>
    <property type="project" value="InterPro"/>
</dbReference>
<dbReference type="GO" id="GO:0005975">
    <property type="term" value="P:carbohydrate metabolic process"/>
    <property type="evidence" value="ECO:0007669"/>
    <property type="project" value="InterPro"/>
</dbReference>
<dbReference type="GO" id="GO:0046167">
    <property type="term" value="P:glycerol-3-phosphate biosynthetic process"/>
    <property type="evidence" value="ECO:0007669"/>
    <property type="project" value="UniProtKB-UniRule"/>
</dbReference>
<dbReference type="GO" id="GO:0046168">
    <property type="term" value="P:glycerol-3-phosphate catabolic process"/>
    <property type="evidence" value="ECO:0007669"/>
    <property type="project" value="InterPro"/>
</dbReference>
<dbReference type="GO" id="GO:0006650">
    <property type="term" value="P:glycerophospholipid metabolic process"/>
    <property type="evidence" value="ECO:0007669"/>
    <property type="project" value="UniProtKB-UniRule"/>
</dbReference>
<dbReference type="GO" id="GO:0008654">
    <property type="term" value="P:phospholipid biosynthetic process"/>
    <property type="evidence" value="ECO:0007669"/>
    <property type="project" value="UniProtKB-KW"/>
</dbReference>
<dbReference type="FunFam" id="1.10.1040.10:FF:000001">
    <property type="entry name" value="Glycerol-3-phosphate dehydrogenase [NAD(P)+]"/>
    <property type="match status" value="1"/>
</dbReference>
<dbReference type="FunFam" id="3.40.50.720:FF:000019">
    <property type="entry name" value="Glycerol-3-phosphate dehydrogenase [NAD(P)+]"/>
    <property type="match status" value="1"/>
</dbReference>
<dbReference type="Gene3D" id="1.10.1040.10">
    <property type="entry name" value="N-(1-d-carboxylethyl)-l-norvaline Dehydrogenase, domain 2"/>
    <property type="match status" value="1"/>
</dbReference>
<dbReference type="Gene3D" id="3.40.50.720">
    <property type="entry name" value="NAD(P)-binding Rossmann-like Domain"/>
    <property type="match status" value="1"/>
</dbReference>
<dbReference type="HAMAP" id="MF_00394">
    <property type="entry name" value="NAD_Glyc3P_dehydrog"/>
    <property type="match status" value="1"/>
</dbReference>
<dbReference type="InterPro" id="IPR008927">
    <property type="entry name" value="6-PGluconate_DH-like_C_sf"/>
</dbReference>
<dbReference type="InterPro" id="IPR013328">
    <property type="entry name" value="6PGD_dom2"/>
</dbReference>
<dbReference type="InterPro" id="IPR006168">
    <property type="entry name" value="G3P_DH_NAD-dep"/>
</dbReference>
<dbReference type="InterPro" id="IPR006109">
    <property type="entry name" value="G3P_DH_NAD-dep_C"/>
</dbReference>
<dbReference type="InterPro" id="IPR011128">
    <property type="entry name" value="G3P_DH_NAD-dep_N"/>
</dbReference>
<dbReference type="InterPro" id="IPR036291">
    <property type="entry name" value="NAD(P)-bd_dom_sf"/>
</dbReference>
<dbReference type="NCBIfam" id="NF000940">
    <property type="entry name" value="PRK00094.1-2"/>
    <property type="match status" value="1"/>
</dbReference>
<dbReference type="NCBIfam" id="NF000941">
    <property type="entry name" value="PRK00094.1-3"/>
    <property type="match status" value="1"/>
</dbReference>
<dbReference type="NCBIfam" id="NF000942">
    <property type="entry name" value="PRK00094.1-4"/>
    <property type="match status" value="1"/>
</dbReference>
<dbReference type="PANTHER" id="PTHR11728">
    <property type="entry name" value="GLYCEROL-3-PHOSPHATE DEHYDROGENASE"/>
    <property type="match status" value="1"/>
</dbReference>
<dbReference type="PANTHER" id="PTHR11728:SF1">
    <property type="entry name" value="GLYCEROL-3-PHOSPHATE DEHYDROGENASE [NAD(+)] 2, CHLOROPLASTIC"/>
    <property type="match status" value="1"/>
</dbReference>
<dbReference type="Pfam" id="PF07479">
    <property type="entry name" value="NAD_Gly3P_dh_C"/>
    <property type="match status" value="1"/>
</dbReference>
<dbReference type="Pfam" id="PF01210">
    <property type="entry name" value="NAD_Gly3P_dh_N"/>
    <property type="match status" value="1"/>
</dbReference>
<dbReference type="PIRSF" id="PIRSF000114">
    <property type="entry name" value="Glycerol-3-P_dh"/>
    <property type="match status" value="1"/>
</dbReference>
<dbReference type="PRINTS" id="PR00077">
    <property type="entry name" value="GPDHDRGNASE"/>
</dbReference>
<dbReference type="SUPFAM" id="SSF48179">
    <property type="entry name" value="6-phosphogluconate dehydrogenase C-terminal domain-like"/>
    <property type="match status" value="1"/>
</dbReference>
<dbReference type="SUPFAM" id="SSF51735">
    <property type="entry name" value="NAD(P)-binding Rossmann-fold domains"/>
    <property type="match status" value="1"/>
</dbReference>
<dbReference type="PROSITE" id="PS00957">
    <property type="entry name" value="NAD_G3PDH"/>
    <property type="match status" value="1"/>
</dbReference>
<organism>
    <name type="scientific">Bacillus cereus (strain ZK / E33L)</name>
    <dbReference type="NCBI Taxonomy" id="288681"/>
    <lineage>
        <taxon>Bacteria</taxon>
        <taxon>Bacillati</taxon>
        <taxon>Bacillota</taxon>
        <taxon>Bacilli</taxon>
        <taxon>Bacillales</taxon>
        <taxon>Bacillaceae</taxon>
        <taxon>Bacillus</taxon>
        <taxon>Bacillus cereus group</taxon>
    </lineage>
</organism>
<gene>
    <name evidence="1" type="primary">gpsA</name>
    <name type="ordered locus">BCE33L1387</name>
</gene>
<accession>Q63DM7</accession>
<sequence>MTKITVVGAGSWGTALAMVLADNGHDVRIWGNRSELMDEINTKHENSRYLPGITLPSTIVAYSSLEEALVDVNVVLLVVPTKAYREVLQDMKKYVAGPTTWIHASKGIEPGTSKRISEVIEEEIPEDLIKDVVVLSGPSHAEEVGLRQATTVTSAAKRMEAAEEVQDLFMNSYFRVYTNPDIVGVELGGALKNIIALAAGITDGLGLGDNAKAALMTRGLTEIARLGRKMGGNPLTFAGLTGMGDLIVTCTSVHSRNWRAGNMLGKGHSLEEVLESMGMVVEGVRTTKAAHELAEKMEVEMPITAALYDVLFNGNNVKDAVGSLMGRVRKHEVEAIPDLL</sequence>
<keyword id="KW-0963">Cytoplasm</keyword>
<keyword id="KW-0444">Lipid biosynthesis</keyword>
<keyword id="KW-0443">Lipid metabolism</keyword>
<keyword id="KW-0520">NAD</keyword>
<keyword id="KW-0521">NADP</keyword>
<keyword id="KW-0547">Nucleotide-binding</keyword>
<keyword id="KW-0560">Oxidoreductase</keyword>
<keyword id="KW-0594">Phospholipid biosynthesis</keyword>
<keyword id="KW-1208">Phospholipid metabolism</keyword>
<name>GPDA_BACCZ</name>